<accession>Q1CLK8</accession>
<accession>C4GPY3</accession>
<reference key="1">
    <citation type="journal article" date="2006" name="J. Bacteriol.">
        <title>Complete genome sequence of Yersinia pestis strains Antiqua and Nepal516: evidence of gene reduction in an emerging pathogen.</title>
        <authorList>
            <person name="Chain P.S.G."/>
            <person name="Hu P."/>
            <person name="Malfatti S.A."/>
            <person name="Radnedge L."/>
            <person name="Larimer F."/>
            <person name="Vergez L.M."/>
            <person name="Worsham P."/>
            <person name="Chu M.C."/>
            <person name="Andersen G.L."/>
        </authorList>
    </citation>
    <scope>NUCLEOTIDE SEQUENCE [LARGE SCALE GENOMIC DNA]</scope>
    <source>
        <strain>Nepal516</strain>
    </source>
</reference>
<reference key="2">
    <citation type="submission" date="2009-04" db="EMBL/GenBank/DDBJ databases">
        <title>Yersinia pestis Nepal516A whole genome shotgun sequencing project.</title>
        <authorList>
            <person name="Plunkett G. III"/>
            <person name="Anderson B.D."/>
            <person name="Baumler D.J."/>
            <person name="Burland V."/>
            <person name="Cabot E.L."/>
            <person name="Glasner J.D."/>
            <person name="Mau B."/>
            <person name="Neeno-Eckwall E."/>
            <person name="Perna N.T."/>
            <person name="Munk A.C."/>
            <person name="Tapia R."/>
            <person name="Green L.D."/>
            <person name="Rogers Y.C."/>
            <person name="Detter J.C."/>
            <person name="Bruce D.C."/>
            <person name="Brettin T.S."/>
        </authorList>
    </citation>
    <scope>NUCLEOTIDE SEQUENCE [LARGE SCALE GENOMIC DNA]</scope>
    <source>
        <strain>Nepal516</strain>
    </source>
</reference>
<sequence length="61" mass="6853">MLILTRRVGETLMIGDEVTVTVLGVKGNQVRIGVNAPKEVSVHREEIYQRIQAEKSQPTTY</sequence>
<name>CSRA_YERPN</name>
<organism>
    <name type="scientific">Yersinia pestis bv. Antiqua (strain Nepal516)</name>
    <dbReference type="NCBI Taxonomy" id="377628"/>
    <lineage>
        <taxon>Bacteria</taxon>
        <taxon>Pseudomonadati</taxon>
        <taxon>Pseudomonadota</taxon>
        <taxon>Gammaproteobacteria</taxon>
        <taxon>Enterobacterales</taxon>
        <taxon>Yersiniaceae</taxon>
        <taxon>Yersinia</taxon>
    </lineage>
</organism>
<comment type="function">
    <text evidence="1">A key translational regulator that binds mRNA to regulate translation initiation and/or mRNA stability. Mediates global changes in gene expression, shifting from rapid growth to stress survival by linking envelope stress, the stringent response and the catabolite repression systems. Usually binds in the 5'-UTR; binding at or near the Shine-Dalgarno sequence prevents ribosome-binding, repressing translation, binding elsewhere in the 5'-UTR can activate translation and/or stabilize the mRNA. Its function is antagonized by small RNA(s).</text>
</comment>
<comment type="subunit">
    <text evidence="1">Homodimer; the beta-strands of each monomer intercalate to form a hydrophobic core, while the alpha-helices form wings that extend away from the core.</text>
</comment>
<comment type="subcellular location">
    <subcellularLocation>
        <location evidence="1">Cytoplasm</location>
    </subcellularLocation>
</comment>
<comment type="similarity">
    <text evidence="1">Belongs to the CsrA/RsmA family.</text>
</comment>
<evidence type="ECO:0000255" key="1">
    <source>
        <dbReference type="HAMAP-Rule" id="MF_00167"/>
    </source>
</evidence>
<proteinExistence type="inferred from homology"/>
<feature type="chain" id="PRO_1000023443" description="Translational regulator CsrA">
    <location>
        <begin position="1"/>
        <end position="61"/>
    </location>
</feature>
<protein>
    <recommendedName>
        <fullName evidence="1">Translational regulator CsrA</fullName>
    </recommendedName>
    <alternativeName>
        <fullName evidence="1">Carbon storage regulator</fullName>
    </alternativeName>
</protein>
<gene>
    <name evidence="1" type="primary">csrA</name>
    <name type="ordered locus">YPN_0790</name>
    <name type="ORF">YP516_0842</name>
</gene>
<keyword id="KW-0010">Activator</keyword>
<keyword id="KW-0963">Cytoplasm</keyword>
<keyword id="KW-0678">Repressor</keyword>
<keyword id="KW-0694">RNA-binding</keyword>
<keyword id="KW-0810">Translation regulation</keyword>
<dbReference type="EMBL" id="CP000305">
    <property type="protein sequence ID" value="ABG17122.1"/>
    <property type="molecule type" value="Genomic_DNA"/>
</dbReference>
<dbReference type="EMBL" id="ACNQ01000007">
    <property type="protein sequence ID" value="EEO77989.1"/>
    <property type="molecule type" value="Genomic_DNA"/>
</dbReference>
<dbReference type="RefSeq" id="WP_002209449.1">
    <property type="nucleotide sequence ID" value="NZ_ACNQ01000007.1"/>
</dbReference>
<dbReference type="SMR" id="Q1CLK8"/>
<dbReference type="GeneID" id="97457422"/>
<dbReference type="KEGG" id="ypn:YPN_0790"/>
<dbReference type="HOGENOM" id="CLU_164837_2_1_6"/>
<dbReference type="Proteomes" id="UP000008936">
    <property type="component" value="Chromosome"/>
</dbReference>
<dbReference type="GO" id="GO:0005829">
    <property type="term" value="C:cytosol"/>
    <property type="evidence" value="ECO:0007669"/>
    <property type="project" value="TreeGrafter"/>
</dbReference>
<dbReference type="GO" id="GO:0048027">
    <property type="term" value="F:mRNA 5'-UTR binding"/>
    <property type="evidence" value="ECO:0007669"/>
    <property type="project" value="UniProtKB-UniRule"/>
</dbReference>
<dbReference type="GO" id="GO:0006402">
    <property type="term" value="P:mRNA catabolic process"/>
    <property type="evidence" value="ECO:0007669"/>
    <property type="project" value="InterPro"/>
</dbReference>
<dbReference type="GO" id="GO:0045947">
    <property type="term" value="P:negative regulation of translational initiation"/>
    <property type="evidence" value="ECO:0007669"/>
    <property type="project" value="UniProtKB-UniRule"/>
</dbReference>
<dbReference type="GO" id="GO:0045948">
    <property type="term" value="P:positive regulation of translational initiation"/>
    <property type="evidence" value="ECO:0007669"/>
    <property type="project" value="UniProtKB-UniRule"/>
</dbReference>
<dbReference type="GO" id="GO:0006109">
    <property type="term" value="P:regulation of carbohydrate metabolic process"/>
    <property type="evidence" value="ECO:0007669"/>
    <property type="project" value="UniProtKB-UniRule"/>
</dbReference>
<dbReference type="FunFam" id="2.60.40.4380:FF:000001">
    <property type="entry name" value="Translational regulator CsrA"/>
    <property type="match status" value="1"/>
</dbReference>
<dbReference type="Gene3D" id="2.60.40.4380">
    <property type="entry name" value="Translational regulator CsrA"/>
    <property type="match status" value="1"/>
</dbReference>
<dbReference type="HAMAP" id="MF_00167">
    <property type="entry name" value="CsrA"/>
    <property type="match status" value="1"/>
</dbReference>
<dbReference type="InterPro" id="IPR003751">
    <property type="entry name" value="CsrA"/>
</dbReference>
<dbReference type="InterPro" id="IPR036107">
    <property type="entry name" value="CsrA_sf"/>
</dbReference>
<dbReference type="NCBIfam" id="TIGR00202">
    <property type="entry name" value="csrA"/>
    <property type="match status" value="1"/>
</dbReference>
<dbReference type="NCBIfam" id="NF002469">
    <property type="entry name" value="PRK01712.1"/>
    <property type="match status" value="1"/>
</dbReference>
<dbReference type="PANTHER" id="PTHR34984">
    <property type="entry name" value="CARBON STORAGE REGULATOR"/>
    <property type="match status" value="1"/>
</dbReference>
<dbReference type="PANTHER" id="PTHR34984:SF1">
    <property type="entry name" value="CARBON STORAGE REGULATOR"/>
    <property type="match status" value="1"/>
</dbReference>
<dbReference type="Pfam" id="PF02599">
    <property type="entry name" value="CsrA"/>
    <property type="match status" value="1"/>
</dbReference>
<dbReference type="SUPFAM" id="SSF117130">
    <property type="entry name" value="CsrA-like"/>
    <property type="match status" value="1"/>
</dbReference>